<protein>
    <recommendedName>
        <fullName evidence="1">Queuine tRNA-ribosyltransferase</fullName>
        <ecNumber evidence="1">2.4.2.29</ecNumber>
    </recommendedName>
    <alternativeName>
        <fullName evidence="1">Guanine insertion enzyme</fullName>
    </alternativeName>
    <alternativeName>
        <fullName evidence="1">tRNA-guanine transglycosylase</fullName>
    </alternativeName>
</protein>
<dbReference type="EC" id="2.4.2.29" evidence="1"/>
<dbReference type="EMBL" id="CP000776">
    <property type="protein sequence ID" value="ABS51233.1"/>
    <property type="molecule type" value="Genomic_DNA"/>
</dbReference>
<dbReference type="RefSeq" id="WP_012109027.1">
    <property type="nucleotide sequence ID" value="NC_009714.1"/>
</dbReference>
<dbReference type="SMR" id="A7I2I6"/>
<dbReference type="STRING" id="360107.CHAB381_1172"/>
<dbReference type="KEGG" id="cha:CHAB381_1172"/>
<dbReference type="eggNOG" id="COG0343">
    <property type="taxonomic scope" value="Bacteria"/>
</dbReference>
<dbReference type="HOGENOM" id="CLU_022060_0_1_7"/>
<dbReference type="OrthoDB" id="9805417at2"/>
<dbReference type="UniPathway" id="UPA00392"/>
<dbReference type="Proteomes" id="UP000002407">
    <property type="component" value="Chromosome"/>
</dbReference>
<dbReference type="GO" id="GO:0005829">
    <property type="term" value="C:cytosol"/>
    <property type="evidence" value="ECO:0007669"/>
    <property type="project" value="TreeGrafter"/>
</dbReference>
<dbReference type="GO" id="GO:0046872">
    <property type="term" value="F:metal ion binding"/>
    <property type="evidence" value="ECO:0007669"/>
    <property type="project" value="UniProtKB-KW"/>
</dbReference>
<dbReference type="GO" id="GO:0008479">
    <property type="term" value="F:tRNA-guanosine(34) queuine transglycosylase activity"/>
    <property type="evidence" value="ECO:0007669"/>
    <property type="project" value="UniProtKB-UniRule"/>
</dbReference>
<dbReference type="GO" id="GO:0008616">
    <property type="term" value="P:queuosine biosynthetic process"/>
    <property type="evidence" value="ECO:0007669"/>
    <property type="project" value="UniProtKB-UniRule"/>
</dbReference>
<dbReference type="GO" id="GO:0002099">
    <property type="term" value="P:tRNA wobble guanine modification"/>
    <property type="evidence" value="ECO:0007669"/>
    <property type="project" value="TreeGrafter"/>
</dbReference>
<dbReference type="GO" id="GO:0101030">
    <property type="term" value="P:tRNA-guanine transglycosylation"/>
    <property type="evidence" value="ECO:0007669"/>
    <property type="project" value="InterPro"/>
</dbReference>
<dbReference type="Gene3D" id="3.20.20.105">
    <property type="entry name" value="Queuine tRNA-ribosyltransferase-like"/>
    <property type="match status" value="1"/>
</dbReference>
<dbReference type="HAMAP" id="MF_00168">
    <property type="entry name" value="Q_tRNA_Tgt"/>
    <property type="match status" value="1"/>
</dbReference>
<dbReference type="InterPro" id="IPR050076">
    <property type="entry name" value="ArchSynthase1/Queuine_TRR"/>
</dbReference>
<dbReference type="InterPro" id="IPR004803">
    <property type="entry name" value="TGT"/>
</dbReference>
<dbReference type="InterPro" id="IPR036511">
    <property type="entry name" value="TGT-like_sf"/>
</dbReference>
<dbReference type="InterPro" id="IPR002616">
    <property type="entry name" value="tRNA_ribo_trans-like"/>
</dbReference>
<dbReference type="NCBIfam" id="TIGR00430">
    <property type="entry name" value="Q_tRNA_tgt"/>
    <property type="match status" value="1"/>
</dbReference>
<dbReference type="NCBIfam" id="TIGR00449">
    <property type="entry name" value="tgt_general"/>
    <property type="match status" value="1"/>
</dbReference>
<dbReference type="PANTHER" id="PTHR46499">
    <property type="entry name" value="QUEUINE TRNA-RIBOSYLTRANSFERASE"/>
    <property type="match status" value="1"/>
</dbReference>
<dbReference type="PANTHER" id="PTHR46499:SF1">
    <property type="entry name" value="QUEUINE TRNA-RIBOSYLTRANSFERASE"/>
    <property type="match status" value="1"/>
</dbReference>
<dbReference type="Pfam" id="PF01702">
    <property type="entry name" value="TGT"/>
    <property type="match status" value="1"/>
</dbReference>
<dbReference type="SUPFAM" id="SSF51713">
    <property type="entry name" value="tRNA-guanine transglycosylase"/>
    <property type="match status" value="1"/>
</dbReference>
<reference key="1">
    <citation type="submission" date="2007-07" db="EMBL/GenBank/DDBJ databases">
        <title>Complete genome sequence of Campylobacter hominis ATCC BAA-381, a commensal isolated from the human gastrointestinal tract.</title>
        <authorList>
            <person name="Fouts D.E."/>
            <person name="Mongodin E.F."/>
            <person name="Puiu D."/>
            <person name="Sebastian Y."/>
            <person name="Miller W.G."/>
            <person name="Mandrell R.E."/>
            <person name="Nelson K.E."/>
        </authorList>
    </citation>
    <scope>NUCLEOTIDE SEQUENCE [LARGE SCALE GENOMIC DNA]</scope>
    <source>
        <strain>ATCC BAA-381 / DSM 21671 / CCUG 45161 / LMG 19568 / NCTC 13146 / CH001A</strain>
    </source>
</reference>
<gene>
    <name evidence="1" type="primary">tgt</name>
    <name type="ordered locus">CHAB381_1172</name>
</gene>
<feature type="chain" id="PRO_1000016770" description="Queuine tRNA-ribosyltransferase">
    <location>
        <begin position="1"/>
        <end position="372"/>
    </location>
</feature>
<feature type="region of interest" description="RNA binding" evidence="1">
    <location>
        <begin position="251"/>
        <end position="257"/>
    </location>
</feature>
<feature type="region of interest" description="RNA binding; important for wobble base 34 recognition" evidence="1">
    <location>
        <begin position="275"/>
        <end position="279"/>
    </location>
</feature>
<feature type="active site" description="Proton acceptor" evidence="1">
    <location>
        <position position="90"/>
    </location>
</feature>
<feature type="active site" description="Nucleophile" evidence="1">
    <location>
        <position position="270"/>
    </location>
</feature>
<feature type="binding site" evidence="1">
    <location>
        <begin position="90"/>
        <end position="94"/>
    </location>
    <ligand>
        <name>substrate</name>
    </ligand>
</feature>
<feature type="binding site" evidence="1">
    <location>
        <position position="144"/>
    </location>
    <ligand>
        <name>substrate</name>
    </ligand>
</feature>
<feature type="binding site" evidence="1">
    <location>
        <position position="193"/>
    </location>
    <ligand>
        <name>substrate</name>
    </ligand>
</feature>
<feature type="binding site" evidence="1">
    <location>
        <position position="220"/>
    </location>
    <ligand>
        <name>substrate</name>
    </ligand>
</feature>
<feature type="binding site" evidence="1">
    <location>
        <position position="308"/>
    </location>
    <ligand>
        <name>Zn(2+)</name>
        <dbReference type="ChEBI" id="CHEBI:29105"/>
    </ligand>
</feature>
<feature type="binding site" evidence="1">
    <location>
        <position position="310"/>
    </location>
    <ligand>
        <name>Zn(2+)</name>
        <dbReference type="ChEBI" id="CHEBI:29105"/>
    </ligand>
</feature>
<feature type="binding site" evidence="1">
    <location>
        <position position="313"/>
    </location>
    <ligand>
        <name>Zn(2+)</name>
        <dbReference type="ChEBI" id="CHEBI:29105"/>
    </ligand>
</feature>
<feature type="binding site" evidence="1">
    <location>
        <position position="339"/>
    </location>
    <ligand>
        <name>Zn(2+)</name>
        <dbReference type="ChEBI" id="CHEBI:29105"/>
    </ligand>
</feature>
<keyword id="KW-0328">Glycosyltransferase</keyword>
<keyword id="KW-0479">Metal-binding</keyword>
<keyword id="KW-0671">Queuosine biosynthesis</keyword>
<keyword id="KW-1185">Reference proteome</keyword>
<keyword id="KW-0808">Transferase</keyword>
<keyword id="KW-0819">tRNA processing</keyword>
<keyword id="KW-0862">Zinc</keyword>
<name>TGT_CAMHC</name>
<proteinExistence type="inferred from homology"/>
<organism>
    <name type="scientific">Campylobacter hominis (strain ATCC BAA-381 / DSM 21671 / CCUG 45161 / LMG 19568 / NCTC 13146 / CH001A)</name>
    <dbReference type="NCBI Taxonomy" id="360107"/>
    <lineage>
        <taxon>Bacteria</taxon>
        <taxon>Pseudomonadati</taxon>
        <taxon>Campylobacterota</taxon>
        <taxon>Epsilonproteobacteria</taxon>
        <taxon>Campylobacterales</taxon>
        <taxon>Campylobacteraceae</taxon>
        <taxon>Campylobacter</taxon>
    </lineage>
</organism>
<accession>A7I2I6</accession>
<sequence>MKFQIDKTDGNARACTITTAHSVIKTPIFMPVGTVGAVKSLDALDLKEILDAKIILANTYHMFLRPGSKIVKEFGGLHGFTKFDRSFLTDSGGFQAFSLRTNTKNDDDGIHFKSHIDGSLHYFTPTSVLDTQYDFGSDIMMILDDLVALPADPKRVKLSIERTIKWAKKAINYHLQKRESGVGLNQNIFGIIQGGTDENARKFCAQSLCELPFDGLAIGGLSVGETNREMYDTVEAVMPYIDSARPRYLMGVGTPEDIVENVERGVDMFDCVMPTRNARNGTLFTSFGKINIKSARFIHDDTPIDPCCDCYTCKNYSRGYLNHLYRAREITFYRLASLHNLHYYLHLVSDIRTAILEGKFLEFKKDFYSKRS</sequence>
<comment type="function">
    <text evidence="1">Catalyzes the base-exchange of a guanine (G) residue with the queuine precursor 7-aminomethyl-7-deazaguanine (PreQ1) at position 34 (anticodon wobble position) in tRNAs with GU(N) anticodons (tRNA-Asp, -Asn, -His and -Tyr). Catalysis occurs through a double-displacement mechanism. The nucleophile active site attacks the C1' of nucleotide 34 to detach the guanine base from the RNA, forming a covalent enzyme-RNA intermediate. The proton acceptor active site deprotonates the incoming PreQ1, allowing a nucleophilic attack on the C1' of the ribose to form the product. After dissociation, two additional enzymatic reactions on the tRNA convert PreQ1 to queuine (Q), resulting in the hypermodified nucleoside queuosine (7-(((4,5-cis-dihydroxy-2-cyclopenten-1-yl)amino)methyl)-7-deazaguanosine).</text>
</comment>
<comment type="catalytic activity">
    <reaction evidence="1">
        <text>7-aminomethyl-7-carbaguanine + guanosine(34) in tRNA = 7-aminomethyl-7-carbaguanosine(34) in tRNA + guanine</text>
        <dbReference type="Rhea" id="RHEA:24104"/>
        <dbReference type="Rhea" id="RHEA-COMP:10341"/>
        <dbReference type="Rhea" id="RHEA-COMP:10342"/>
        <dbReference type="ChEBI" id="CHEBI:16235"/>
        <dbReference type="ChEBI" id="CHEBI:58703"/>
        <dbReference type="ChEBI" id="CHEBI:74269"/>
        <dbReference type="ChEBI" id="CHEBI:82833"/>
        <dbReference type="EC" id="2.4.2.29"/>
    </reaction>
</comment>
<comment type="cofactor">
    <cofactor evidence="1">
        <name>Zn(2+)</name>
        <dbReference type="ChEBI" id="CHEBI:29105"/>
    </cofactor>
    <text evidence="1">Binds 1 zinc ion per subunit.</text>
</comment>
<comment type="pathway">
    <text evidence="1">tRNA modification; tRNA-queuosine biosynthesis.</text>
</comment>
<comment type="subunit">
    <text evidence="1">Homodimer. Within each dimer, one monomer is responsible for RNA recognition and catalysis, while the other monomer binds to the replacement base PreQ1.</text>
</comment>
<comment type="similarity">
    <text evidence="1">Belongs to the queuine tRNA-ribosyltransferase family.</text>
</comment>
<evidence type="ECO:0000255" key="1">
    <source>
        <dbReference type="HAMAP-Rule" id="MF_00168"/>
    </source>
</evidence>